<reference key="1">
    <citation type="journal article" date="2013" name="Nature">
        <title>The zebrafish reference genome sequence and its relationship to the human genome.</title>
        <authorList>
            <person name="Howe K."/>
            <person name="Clark M.D."/>
            <person name="Torroja C.F."/>
            <person name="Torrance J."/>
            <person name="Berthelot C."/>
            <person name="Muffato M."/>
            <person name="Collins J.E."/>
            <person name="Humphray S."/>
            <person name="McLaren K."/>
            <person name="Matthews L."/>
            <person name="McLaren S."/>
            <person name="Sealy I."/>
            <person name="Caccamo M."/>
            <person name="Churcher C."/>
            <person name="Scott C."/>
            <person name="Barrett J.C."/>
            <person name="Koch R."/>
            <person name="Rauch G.J."/>
            <person name="White S."/>
            <person name="Chow W."/>
            <person name="Kilian B."/>
            <person name="Quintais L.T."/>
            <person name="Guerra-Assuncao J.A."/>
            <person name="Zhou Y."/>
            <person name="Gu Y."/>
            <person name="Yen J."/>
            <person name="Vogel J.H."/>
            <person name="Eyre T."/>
            <person name="Redmond S."/>
            <person name="Banerjee R."/>
            <person name="Chi J."/>
            <person name="Fu B."/>
            <person name="Langley E."/>
            <person name="Maguire S.F."/>
            <person name="Laird G.K."/>
            <person name="Lloyd D."/>
            <person name="Kenyon E."/>
            <person name="Donaldson S."/>
            <person name="Sehra H."/>
            <person name="Almeida-King J."/>
            <person name="Loveland J."/>
            <person name="Trevanion S."/>
            <person name="Jones M."/>
            <person name="Quail M."/>
            <person name="Willey D."/>
            <person name="Hunt A."/>
            <person name="Burton J."/>
            <person name="Sims S."/>
            <person name="McLay K."/>
            <person name="Plumb B."/>
            <person name="Davis J."/>
            <person name="Clee C."/>
            <person name="Oliver K."/>
            <person name="Clark R."/>
            <person name="Riddle C."/>
            <person name="Elliot D."/>
            <person name="Threadgold G."/>
            <person name="Harden G."/>
            <person name="Ware D."/>
            <person name="Begum S."/>
            <person name="Mortimore B."/>
            <person name="Kerry G."/>
            <person name="Heath P."/>
            <person name="Phillimore B."/>
            <person name="Tracey A."/>
            <person name="Corby N."/>
            <person name="Dunn M."/>
            <person name="Johnson C."/>
            <person name="Wood J."/>
            <person name="Clark S."/>
            <person name="Pelan S."/>
            <person name="Griffiths G."/>
            <person name="Smith M."/>
            <person name="Glithero R."/>
            <person name="Howden P."/>
            <person name="Barker N."/>
            <person name="Lloyd C."/>
            <person name="Stevens C."/>
            <person name="Harley J."/>
            <person name="Holt K."/>
            <person name="Panagiotidis G."/>
            <person name="Lovell J."/>
            <person name="Beasley H."/>
            <person name="Henderson C."/>
            <person name="Gordon D."/>
            <person name="Auger K."/>
            <person name="Wright D."/>
            <person name="Collins J."/>
            <person name="Raisen C."/>
            <person name="Dyer L."/>
            <person name="Leung K."/>
            <person name="Robertson L."/>
            <person name="Ambridge K."/>
            <person name="Leongamornlert D."/>
            <person name="McGuire S."/>
            <person name="Gilderthorp R."/>
            <person name="Griffiths C."/>
            <person name="Manthravadi D."/>
            <person name="Nichol S."/>
            <person name="Barker G."/>
            <person name="Whitehead S."/>
            <person name="Kay M."/>
            <person name="Brown J."/>
            <person name="Murnane C."/>
            <person name="Gray E."/>
            <person name="Humphries M."/>
            <person name="Sycamore N."/>
            <person name="Barker D."/>
            <person name="Saunders D."/>
            <person name="Wallis J."/>
            <person name="Babbage A."/>
            <person name="Hammond S."/>
            <person name="Mashreghi-Mohammadi M."/>
            <person name="Barr L."/>
            <person name="Martin S."/>
            <person name="Wray P."/>
            <person name="Ellington A."/>
            <person name="Matthews N."/>
            <person name="Ellwood M."/>
            <person name="Woodmansey R."/>
            <person name="Clark G."/>
            <person name="Cooper J."/>
            <person name="Tromans A."/>
            <person name="Grafham D."/>
            <person name="Skuce C."/>
            <person name="Pandian R."/>
            <person name="Andrews R."/>
            <person name="Harrison E."/>
            <person name="Kimberley A."/>
            <person name="Garnett J."/>
            <person name="Fosker N."/>
            <person name="Hall R."/>
            <person name="Garner P."/>
            <person name="Kelly D."/>
            <person name="Bird C."/>
            <person name="Palmer S."/>
            <person name="Gehring I."/>
            <person name="Berger A."/>
            <person name="Dooley C.M."/>
            <person name="Ersan-Urun Z."/>
            <person name="Eser C."/>
            <person name="Geiger H."/>
            <person name="Geisler M."/>
            <person name="Karotki L."/>
            <person name="Kirn A."/>
            <person name="Konantz J."/>
            <person name="Konantz M."/>
            <person name="Oberlander M."/>
            <person name="Rudolph-Geiger S."/>
            <person name="Teucke M."/>
            <person name="Lanz C."/>
            <person name="Raddatz G."/>
            <person name="Osoegawa K."/>
            <person name="Zhu B."/>
            <person name="Rapp A."/>
            <person name="Widaa S."/>
            <person name="Langford C."/>
            <person name="Yang F."/>
            <person name="Schuster S.C."/>
            <person name="Carter N.P."/>
            <person name="Harrow J."/>
            <person name="Ning Z."/>
            <person name="Herrero J."/>
            <person name="Searle S.M."/>
            <person name="Enright A."/>
            <person name="Geisler R."/>
            <person name="Plasterk R.H."/>
            <person name="Lee C."/>
            <person name="Westerfield M."/>
            <person name="de Jong P.J."/>
            <person name="Zon L.I."/>
            <person name="Postlethwait J.H."/>
            <person name="Nusslein-Volhard C."/>
            <person name="Hubbard T.J."/>
            <person name="Roest Crollius H."/>
            <person name="Rogers J."/>
            <person name="Stemple D.L."/>
        </authorList>
    </citation>
    <scope>NUCLEOTIDE SEQUENCE [LARGE SCALE GENOMIC DNA]</scope>
    <source>
        <strain>Tuebingen</strain>
    </source>
</reference>
<reference key="2">
    <citation type="submission" date="2008-04" db="EMBL/GenBank/DDBJ databases">
        <authorList>
            <consortium name="NIH - Zebrafish Gene Collection (ZGC) project"/>
        </authorList>
    </citation>
    <scope>NUCLEOTIDE SEQUENCE [LARGE SCALE MRNA]</scope>
    <source>
        <tissue>Eye</tissue>
        <tissue>Ovary</tissue>
    </source>
</reference>
<keyword id="KW-0067">ATP-binding</keyword>
<keyword id="KW-0227">DNA damage</keyword>
<keyword id="KW-0234">DNA repair</keyword>
<keyword id="KW-0547">Nucleotide-binding</keyword>
<keyword id="KW-0539">Nucleus</keyword>
<keyword id="KW-1185">Reference proteome</keyword>
<keyword id="KW-0808">Transferase</keyword>
<keyword id="KW-0833">Ubl conjugation pathway</keyword>
<organism>
    <name type="scientific">Danio rerio</name>
    <name type="common">Zebrafish</name>
    <name type="synonym">Brachydanio rerio</name>
    <dbReference type="NCBI Taxonomy" id="7955"/>
    <lineage>
        <taxon>Eukaryota</taxon>
        <taxon>Metazoa</taxon>
        <taxon>Chordata</taxon>
        <taxon>Craniata</taxon>
        <taxon>Vertebrata</taxon>
        <taxon>Euteleostomi</taxon>
        <taxon>Actinopterygii</taxon>
        <taxon>Neopterygii</taxon>
        <taxon>Teleostei</taxon>
        <taxon>Ostariophysi</taxon>
        <taxon>Cypriniformes</taxon>
        <taxon>Danionidae</taxon>
        <taxon>Danioninae</taxon>
        <taxon>Danio</taxon>
    </lineage>
</organism>
<gene>
    <name type="primary">ube2wb</name>
    <name type="ORF">zgc:136503</name>
</gene>
<comment type="function">
    <text evidence="1">Accepts ubiquitin from the E1 complex and catalyzes its covalent attachment to other proteins. Catalyzes monoubiquitination. Involved in degradation of misfolded chaperone substrate and DNA repair.</text>
</comment>
<comment type="catalytic activity">
    <reaction evidence="1 2">
        <text>S-ubiquitinyl-[E1 ubiquitin-activating enzyme]-L-cysteine + [E2 ubiquitin-conjugating enzyme]-L-cysteine = [E1 ubiquitin-activating enzyme]-L-cysteine + S-ubiquitinyl-[E2 ubiquitin-conjugating enzyme]-L-cysteine.</text>
        <dbReference type="EC" id="2.3.2.23"/>
    </reaction>
</comment>
<comment type="catalytic activity">
    <reaction evidence="1">
        <text>S-ubiquitinyl-[E1 ubiquitin-activating enzyme]-L-cysteine + [acceptor protein]-N-terminal-amino acid = [E1 ubiquitin-activating enzyme]-L-cysteine + N-terminal-ubiquitinyl-[acceptor protein].</text>
        <dbReference type="EC" id="2.3.2.25"/>
    </reaction>
</comment>
<comment type="pathway">
    <text evidence="2">Protein modification; protein ubiquitination.</text>
</comment>
<comment type="subcellular location">
    <subcellularLocation>
        <location evidence="1">Nucleus</location>
    </subcellularLocation>
</comment>
<comment type="similarity">
    <text evidence="2">Belongs to the ubiquitin-conjugating enzyme family.</text>
</comment>
<name>UB2WB_DANRE</name>
<dbReference type="EC" id="2.3.2.23"/>
<dbReference type="EC" id="2.3.2.25"/>
<dbReference type="EMBL" id="CR405710">
    <property type="status" value="NOT_ANNOTATED_CDS"/>
    <property type="molecule type" value="Genomic_DNA"/>
</dbReference>
<dbReference type="EMBL" id="BC116563">
    <property type="protein sequence ID" value="AAI16564.1"/>
    <property type="molecule type" value="mRNA"/>
</dbReference>
<dbReference type="EMBL" id="BC139652">
    <property type="protein sequence ID" value="AAI39653.1"/>
    <property type="molecule type" value="mRNA"/>
</dbReference>
<dbReference type="EMBL" id="BC162614">
    <property type="protein sequence ID" value="AAI62614.1"/>
    <property type="molecule type" value="mRNA"/>
</dbReference>
<dbReference type="RefSeq" id="NP_001038758.2">
    <property type="nucleotide sequence ID" value="NM_001045293.2"/>
</dbReference>
<dbReference type="SMR" id="Q1JPX4"/>
<dbReference type="FunCoup" id="Q1JPX4">
    <property type="interactions" value="2726"/>
</dbReference>
<dbReference type="STRING" id="7955.ENSDARP00000108136"/>
<dbReference type="PaxDb" id="7955-ENSDARP00000108136"/>
<dbReference type="Ensembl" id="ENSDART00000182829">
    <property type="protein sequence ID" value="ENSDARP00000156238"/>
    <property type="gene ID" value="ENSDARG00000114911"/>
</dbReference>
<dbReference type="GeneID" id="692325"/>
<dbReference type="KEGG" id="dre:692325"/>
<dbReference type="AGR" id="ZFIN:ZDB-GENE-050113-1"/>
<dbReference type="CTD" id="692325"/>
<dbReference type="ZFIN" id="ZDB-GENE-050113-1">
    <property type="gene designation" value="ube2wb"/>
</dbReference>
<dbReference type="eggNOG" id="KOG0427">
    <property type="taxonomic scope" value="Eukaryota"/>
</dbReference>
<dbReference type="InParanoid" id="Q1JPX4"/>
<dbReference type="OrthoDB" id="406833at2759"/>
<dbReference type="PhylomeDB" id="Q1JPX4"/>
<dbReference type="Reactome" id="R-DRE-8866652">
    <property type="pathway name" value="Synthesis of active ubiquitin: roles of E1 and E2 enzymes"/>
</dbReference>
<dbReference type="Reactome" id="R-DRE-983168">
    <property type="pathway name" value="Antigen processing: Ubiquitination &amp; Proteasome degradation"/>
</dbReference>
<dbReference type="UniPathway" id="UPA00143"/>
<dbReference type="PRO" id="PR:Q1JPX4"/>
<dbReference type="Proteomes" id="UP000000437">
    <property type="component" value="Alternate scaffold 24"/>
</dbReference>
<dbReference type="Proteomes" id="UP000000437">
    <property type="component" value="Chromosome 24"/>
</dbReference>
<dbReference type="GO" id="GO:0005634">
    <property type="term" value="C:nucleus"/>
    <property type="evidence" value="ECO:0000318"/>
    <property type="project" value="GO_Central"/>
</dbReference>
<dbReference type="GO" id="GO:0005524">
    <property type="term" value="F:ATP binding"/>
    <property type="evidence" value="ECO:0007669"/>
    <property type="project" value="UniProtKB-KW"/>
</dbReference>
<dbReference type="GO" id="GO:0061631">
    <property type="term" value="F:ubiquitin conjugating enzyme activity"/>
    <property type="evidence" value="ECO:0000318"/>
    <property type="project" value="GO_Central"/>
</dbReference>
<dbReference type="GO" id="GO:0004842">
    <property type="term" value="F:ubiquitin-protein transferase activity"/>
    <property type="evidence" value="ECO:0000250"/>
    <property type="project" value="UniProtKB"/>
</dbReference>
<dbReference type="GO" id="GO:0071218">
    <property type="term" value="P:cellular response to misfolded protein"/>
    <property type="evidence" value="ECO:0000250"/>
    <property type="project" value="UniProtKB"/>
</dbReference>
<dbReference type="GO" id="GO:0006281">
    <property type="term" value="P:DNA repair"/>
    <property type="evidence" value="ECO:0007669"/>
    <property type="project" value="UniProtKB-KW"/>
</dbReference>
<dbReference type="GO" id="GO:0043161">
    <property type="term" value="P:proteasome-mediated ubiquitin-dependent protein catabolic process"/>
    <property type="evidence" value="ECO:0000250"/>
    <property type="project" value="UniProtKB"/>
</dbReference>
<dbReference type="GO" id="GO:0006513">
    <property type="term" value="P:protein monoubiquitination"/>
    <property type="evidence" value="ECO:0000250"/>
    <property type="project" value="UniProtKB"/>
</dbReference>
<dbReference type="GO" id="GO:0000209">
    <property type="term" value="P:protein polyubiquitination"/>
    <property type="evidence" value="ECO:0000318"/>
    <property type="project" value="GO_Central"/>
</dbReference>
<dbReference type="GO" id="GO:0006515">
    <property type="term" value="P:protein quality control for misfolded or incompletely synthesized proteins"/>
    <property type="evidence" value="ECO:0000250"/>
    <property type="project" value="UniProtKB"/>
</dbReference>
<dbReference type="CDD" id="cd23808">
    <property type="entry name" value="UBCc_UBE2W"/>
    <property type="match status" value="1"/>
</dbReference>
<dbReference type="FunFam" id="3.10.110.10:FF:000022">
    <property type="entry name" value="Ubiquitin-conjugating enzyme E2 W"/>
    <property type="match status" value="1"/>
</dbReference>
<dbReference type="Gene3D" id="3.10.110.10">
    <property type="entry name" value="Ubiquitin Conjugating Enzyme"/>
    <property type="match status" value="1"/>
</dbReference>
<dbReference type="InterPro" id="IPR050113">
    <property type="entry name" value="Ub_conjugating_enzyme"/>
</dbReference>
<dbReference type="InterPro" id="IPR000608">
    <property type="entry name" value="UBQ-conjugat_E2_core"/>
</dbReference>
<dbReference type="InterPro" id="IPR016135">
    <property type="entry name" value="UBQ-conjugating_enzyme/RWD"/>
</dbReference>
<dbReference type="PANTHER" id="PTHR24067">
    <property type="entry name" value="UBIQUITIN-CONJUGATING ENZYME E2"/>
    <property type="match status" value="1"/>
</dbReference>
<dbReference type="Pfam" id="PF00179">
    <property type="entry name" value="UQ_con"/>
    <property type="match status" value="1"/>
</dbReference>
<dbReference type="SMART" id="SM00212">
    <property type="entry name" value="UBCc"/>
    <property type="match status" value="1"/>
</dbReference>
<dbReference type="SUPFAM" id="SSF54495">
    <property type="entry name" value="UBC-like"/>
    <property type="match status" value="1"/>
</dbReference>
<dbReference type="PROSITE" id="PS50127">
    <property type="entry name" value="UBC_2"/>
    <property type="match status" value="1"/>
</dbReference>
<evidence type="ECO:0000250" key="1">
    <source>
        <dbReference type="UniProtKB" id="Q96B02"/>
    </source>
</evidence>
<evidence type="ECO:0000255" key="2">
    <source>
        <dbReference type="PROSITE-ProRule" id="PRU00388"/>
    </source>
</evidence>
<evidence type="ECO:0000305" key="3"/>
<accession>Q1JPX4</accession>
<accession>A4VCG8</accession>
<accession>F1QRU3</accession>
<proteinExistence type="evidence at transcript level"/>
<sequence length="151" mass="17307">MASMQKRLQKELLALQNDPPPGMTLNEKSVQNTITQWIVDMEGASGTVYEGEKFQLLFKFSSRYPFDSPQVMFTGDNIPVHPHVYSNGHICLSILTEDWSPALSVQSVCLSIISMLSSCKEKRRPPDNSFYVRTCNKNPKKTKWWYHDDTC</sequence>
<protein>
    <recommendedName>
        <fullName>Probable ubiquitin-conjugating enzyme E2 W-B</fullName>
        <ecNumber>2.3.2.23</ecNumber>
    </recommendedName>
    <alternativeName>
        <fullName>E2 ubiquitin-conjugating enzyme W-B</fullName>
    </alternativeName>
    <alternativeName>
        <fullName>N-terminal E2 ubiquitin-conjugating enzyme</fullName>
        <ecNumber>2.3.2.25</ecNumber>
    </alternativeName>
    <alternativeName>
        <fullName>Ubiquitin carrier protein W-B</fullName>
    </alternativeName>
    <alternativeName>
        <fullName>Ubiquitin-protein ligase W-B</fullName>
    </alternativeName>
</protein>
<feature type="chain" id="PRO_0000416881" description="Probable ubiquitin-conjugating enzyme E2 W-B">
    <location>
        <begin position="1"/>
        <end position="151"/>
    </location>
</feature>
<feature type="domain" description="UBC core" evidence="2">
    <location>
        <begin position="3"/>
        <end position="151"/>
    </location>
</feature>
<feature type="active site" description="Glycyl thioester intermediate" evidence="2">
    <location>
        <position position="91"/>
    </location>
</feature>
<feature type="sequence conflict" description="In Ref. 2; AAI39653." evidence="3" ref="2">
    <original>F</original>
    <variation>S</variation>
    <location>
        <position position="66"/>
    </location>
</feature>